<name>UBIA_TOLAT</name>
<evidence type="ECO:0000255" key="1">
    <source>
        <dbReference type="HAMAP-Rule" id="MF_01635"/>
    </source>
</evidence>
<sequence length="286" mass="32253">MMSVIPAQWQPYWQLARLDKPIGTLLLLWPTLWALWLASAGVPSFSLLLIFTAGVFVMRSAGCVINDYADRKFDGYVKRTASRPLPAGRLTAVRALLFFLLLVLIAFVLVWQLNQFTIYLSVGGLLLAAIYPFMKRVTSLPQVVLGMAFSWAIPMAYGAVVGQLTVTTWLLFLANLVWTIAYDTMYAMVDRDDDLKIGVKSTAILFGQNDRLYIALLQLGTLTLLAIIGWLEQLTVSYYFSLLLAAGLFIYQQWLIRHRQRDACFRAFLNNNWVGMLIFAGIMLAC</sequence>
<reference key="1">
    <citation type="submission" date="2009-05" db="EMBL/GenBank/DDBJ databases">
        <title>Complete sequence of Tolumonas auensis DSM 9187.</title>
        <authorList>
            <consortium name="US DOE Joint Genome Institute"/>
            <person name="Lucas S."/>
            <person name="Copeland A."/>
            <person name="Lapidus A."/>
            <person name="Glavina del Rio T."/>
            <person name="Tice H."/>
            <person name="Bruce D."/>
            <person name="Goodwin L."/>
            <person name="Pitluck S."/>
            <person name="Chertkov O."/>
            <person name="Brettin T."/>
            <person name="Detter J.C."/>
            <person name="Han C."/>
            <person name="Larimer F."/>
            <person name="Land M."/>
            <person name="Hauser L."/>
            <person name="Kyrpides N."/>
            <person name="Mikhailova N."/>
            <person name="Spring S."/>
            <person name="Beller H."/>
        </authorList>
    </citation>
    <scope>NUCLEOTIDE SEQUENCE [LARGE SCALE GENOMIC DNA]</scope>
    <source>
        <strain>DSM 9187 / NBRC 110442 / TA 4</strain>
    </source>
</reference>
<accession>C4L7X6</accession>
<feature type="chain" id="PRO_1000215806" description="4-hydroxybenzoate octaprenyltransferase">
    <location>
        <begin position="1"/>
        <end position="286"/>
    </location>
</feature>
<feature type="transmembrane region" description="Helical" evidence="1">
    <location>
        <begin position="22"/>
        <end position="42"/>
    </location>
</feature>
<feature type="transmembrane region" description="Helical" evidence="1">
    <location>
        <begin position="45"/>
        <end position="65"/>
    </location>
</feature>
<feature type="transmembrane region" description="Helical" evidence="1">
    <location>
        <begin position="90"/>
        <end position="110"/>
    </location>
</feature>
<feature type="transmembrane region" description="Helical" evidence="1">
    <location>
        <begin position="113"/>
        <end position="133"/>
    </location>
</feature>
<feature type="transmembrane region" description="Helical" evidence="1">
    <location>
        <begin position="142"/>
        <end position="162"/>
    </location>
</feature>
<feature type="transmembrane region" description="Helical" evidence="1">
    <location>
        <begin position="169"/>
        <end position="189"/>
    </location>
</feature>
<feature type="transmembrane region" description="Helical" evidence="1">
    <location>
        <begin position="212"/>
        <end position="232"/>
    </location>
</feature>
<feature type="transmembrane region" description="Helical" evidence="1">
    <location>
        <begin position="236"/>
        <end position="256"/>
    </location>
</feature>
<feature type="transmembrane region" description="Helical" evidence="1">
    <location>
        <begin position="265"/>
        <end position="285"/>
    </location>
</feature>
<proteinExistence type="inferred from homology"/>
<comment type="function">
    <text evidence="1">Catalyzes the prenylation of para-hydroxybenzoate (PHB) with an all-trans polyprenyl group. Mediates the second step in the final reaction sequence of ubiquinone-8 (UQ-8) biosynthesis, which is the condensation of the polyisoprenoid side chain with PHB, generating the first membrane-bound Q intermediate 3-octaprenyl-4-hydroxybenzoate.</text>
</comment>
<comment type="catalytic activity">
    <reaction evidence="1">
        <text>all-trans-octaprenyl diphosphate + 4-hydroxybenzoate = 4-hydroxy-3-(all-trans-octaprenyl)benzoate + diphosphate</text>
        <dbReference type="Rhea" id="RHEA:27782"/>
        <dbReference type="ChEBI" id="CHEBI:1617"/>
        <dbReference type="ChEBI" id="CHEBI:17879"/>
        <dbReference type="ChEBI" id="CHEBI:33019"/>
        <dbReference type="ChEBI" id="CHEBI:57711"/>
        <dbReference type="EC" id="2.5.1.39"/>
    </reaction>
</comment>
<comment type="cofactor">
    <cofactor evidence="1">
        <name>Mg(2+)</name>
        <dbReference type="ChEBI" id="CHEBI:18420"/>
    </cofactor>
</comment>
<comment type="pathway">
    <text evidence="1">Cofactor biosynthesis; ubiquinone biosynthesis.</text>
</comment>
<comment type="subcellular location">
    <subcellularLocation>
        <location evidence="1">Cell inner membrane</location>
        <topology evidence="1">Multi-pass membrane protein</topology>
    </subcellularLocation>
</comment>
<comment type="similarity">
    <text evidence="1">Belongs to the UbiA prenyltransferase family.</text>
</comment>
<organism>
    <name type="scientific">Tolumonas auensis (strain DSM 9187 / NBRC 110442 / TA 4)</name>
    <dbReference type="NCBI Taxonomy" id="595494"/>
    <lineage>
        <taxon>Bacteria</taxon>
        <taxon>Pseudomonadati</taxon>
        <taxon>Pseudomonadota</taxon>
        <taxon>Gammaproteobacteria</taxon>
        <taxon>Aeromonadales</taxon>
        <taxon>Aeromonadaceae</taxon>
        <taxon>Tolumonas</taxon>
    </lineage>
</organism>
<keyword id="KW-0997">Cell inner membrane</keyword>
<keyword id="KW-1003">Cell membrane</keyword>
<keyword id="KW-0460">Magnesium</keyword>
<keyword id="KW-0472">Membrane</keyword>
<keyword id="KW-1185">Reference proteome</keyword>
<keyword id="KW-0808">Transferase</keyword>
<keyword id="KW-0812">Transmembrane</keyword>
<keyword id="KW-1133">Transmembrane helix</keyword>
<keyword id="KW-0831">Ubiquinone biosynthesis</keyword>
<protein>
    <recommendedName>
        <fullName evidence="1">4-hydroxybenzoate octaprenyltransferase</fullName>
        <ecNumber evidence="1">2.5.1.39</ecNumber>
    </recommendedName>
    <alternativeName>
        <fullName evidence="1">4-HB polyprenyltransferase</fullName>
    </alternativeName>
</protein>
<gene>
    <name evidence="1" type="primary">ubiA</name>
    <name type="ordered locus">Tola_0145</name>
</gene>
<dbReference type="EC" id="2.5.1.39" evidence="1"/>
<dbReference type="EMBL" id="CP001616">
    <property type="protein sequence ID" value="ACQ91775.1"/>
    <property type="molecule type" value="Genomic_DNA"/>
</dbReference>
<dbReference type="RefSeq" id="WP_012728374.1">
    <property type="nucleotide sequence ID" value="NC_012691.1"/>
</dbReference>
<dbReference type="SMR" id="C4L7X6"/>
<dbReference type="STRING" id="595494.Tola_0145"/>
<dbReference type="KEGG" id="tau:Tola_0145"/>
<dbReference type="eggNOG" id="COG0382">
    <property type="taxonomic scope" value="Bacteria"/>
</dbReference>
<dbReference type="HOGENOM" id="CLU_034879_1_0_6"/>
<dbReference type="OrthoDB" id="9782418at2"/>
<dbReference type="UniPathway" id="UPA00232"/>
<dbReference type="Proteomes" id="UP000009073">
    <property type="component" value="Chromosome"/>
</dbReference>
<dbReference type="GO" id="GO:0005886">
    <property type="term" value="C:plasma membrane"/>
    <property type="evidence" value="ECO:0007669"/>
    <property type="project" value="UniProtKB-SubCell"/>
</dbReference>
<dbReference type="GO" id="GO:0008412">
    <property type="term" value="F:4-hydroxybenzoate polyprenyltransferase activity"/>
    <property type="evidence" value="ECO:0007669"/>
    <property type="project" value="UniProtKB-UniRule"/>
</dbReference>
<dbReference type="GO" id="GO:0006744">
    <property type="term" value="P:ubiquinone biosynthetic process"/>
    <property type="evidence" value="ECO:0007669"/>
    <property type="project" value="UniProtKB-UniRule"/>
</dbReference>
<dbReference type="CDD" id="cd13959">
    <property type="entry name" value="PT_UbiA_COQ2"/>
    <property type="match status" value="1"/>
</dbReference>
<dbReference type="FunFam" id="1.10.357.140:FF:000002">
    <property type="entry name" value="4-hydroxybenzoate octaprenyltransferase"/>
    <property type="match status" value="1"/>
</dbReference>
<dbReference type="FunFam" id="1.20.120.1780:FF:000001">
    <property type="entry name" value="4-hydroxybenzoate octaprenyltransferase"/>
    <property type="match status" value="1"/>
</dbReference>
<dbReference type="Gene3D" id="1.10.357.140">
    <property type="entry name" value="UbiA prenyltransferase"/>
    <property type="match status" value="1"/>
</dbReference>
<dbReference type="Gene3D" id="1.20.120.1780">
    <property type="entry name" value="UbiA prenyltransferase"/>
    <property type="match status" value="1"/>
</dbReference>
<dbReference type="HAMAP" id="MF_01635">
    <property type="entry name" value="UbiA"/>
    <property type="match status" value="1"/>
</dbReference>
<dbReference type="InterPro" id="IPR006370">
    <property type="entry name" value="HB_polyprenyltransferase-like"/>
</dbReference>
<dbReference type="InterPro" id="IPR039653">
    <property type="entry name" value="Prenyltransferase"/>
</dbReference>
<dbReference type="InterPro" id="IPR000537">
    <property type="entry name" value="UbiA_prenyltransferase"/>
</dbReference>
<dbReference type="InterPro" id="IPR030470">
    <property type="entry name" value="UbiA_prenylTrfase_CS"/>
</dbReference>
<dbReference type="InterPro" id="IPR044878">
    <property type="entry name" value="UbiA_sf"/>
</dbReference>
<dbReference type="NCBIfam" id="TIGR01474">
    <property type="entry name" value="ubiA_proteo"/>
    <property type="match status" value="1"/>
</dbReference>
<dbReference type="PANTHER" id="PTHR11048:SF28">
    <property type="entry name" value="4-HYDROXYBENZOATE POLYPRENYLTRANSFERASE, MITOCHONDRIAL"/>
    <property type="match status" value="1"/>
</dbReference>
<dbReference type="PANTHER" id="PTHR11048">
    <property type="entry name" value="PRENYLTRANSFERASES"/>
    <property type="match status" value="1"/>
</dbReference>
<dbReference type="Pfam" id="PF01040">
    <property type="entry name" value="UbiA"/>
    <property type="match status" value="1"/>
</dbReference>
<dbReference type="PROSITE" id="PS00943">
    <property type="entry name" value="UBIA"/>
    <property type="match status" value="1"/>
</dbReference>